<name>HEM3_METAR</name>
<organism>
    <name type="scientific">Methanocella arvoryzae (strain DSM 22066 / NBRC 105507 / MRE50)</name>
    <dbReference type="NCBI Taxonomy" id="351160"/>
    <lineage>
        <taxon>Archaea</taxon>
        <taxon>Methanobacteriati</taxon>
        <taxon>Methanobacteriota</taxon>
        <taxon>Stenosarchaea group</taxon>
        <taxon>Methanomicrobia</taxon>
        <taxon>Methanocellales</taxon>
        <taxon>Methanocellaceae</taxon>
        <taxon>Methanocella</taxon>
    </lineage>
</organism>
<comment type="function">
    <text evidence="1">Tetrapolymerization of the monopyrrole PBG into the hydroxymethylbilane pre-uroporphyrinogen in several discrete steps.</text>
</comment>
<comment type="catalytic activity">
    <reaction evidence="1">
        <text>4 porphobilinogen + H2O = hydroxymethylbilane + 4 NH4(+)</text>
        <dbReference type="Rhea" id="RHEA:13185"/>
        <dbReference type="ChEBI" id="CHEBI:15377"/>
        <dbReference type="ChEBI" id="CHEBI:28938"/>
        <dbReference type="ChEBI" id="CHEBI:57845"/>
        <dbReference type="ChEBI" id="CHEBI:58126"/>
        <dbReference type="EC" id="2.5.1.61"/>
    </reaction>
</comment>
<comment type="cofactor">
    <cofactor evidence="1">
        <name>dipyrromethane</name>
        <dbReference type="ChEBI" id="CHEBI:60342"/>
    </cofactor>
    <text evidence="1">Binds 1 dipyrromethane group covalently.</text>
</comment>
<comment type="pathway">
    <text evidence="1">Porphyrin-containing compound metabolism; protoporphyrin-IX biosynthesis; coproporphyrinogen-III from 5-aminolevulinate: step 2/4.</text>
</comment>
<comment type="miscellaneous">
    <text evidence="1">The porphobilinogen subunits are added to the dipyrromethane group.</text>
</comment>
<comment type="similarity">
    <text evidence="1">Belongs to the HMBS family.</text>
</comment>
<proteinExistence type="inferred from homology"/>
<feature type="chain" id="PRO_0000304306" description="Probable porphobilinogen deaminase">
    <location>
        <begin position="1"/>
        <end position="303"/>
    </location>
</feature>
<feature type="modified residue" description="S-(dipyrrolylmethanemethyl)cysteine" evidence="1">
    <location>
        <position position="233"/>
    </location>
</feature>
<keyword id="KW-0627">Porphyrin biosynthesis</keyword>
<keyword id="KW-1185">Reference proteome</keyword>
<keyword id="KW-0808">Transferase</keyword>
<dbReference type="EC" id="2.5.1.61" evidence="1"/>
<dbReference type="EMBL" id="AM114193">
    <property type="protein sequence ID" value="CAJ36261.1"/>
    <property type="molecule type" value="Genomic_DNA"/>
</dbReference>
<dbReference type="RefSeq" id="WP_012036257.1">
    <property type="nucleotide sequence ID" value="NC_009464.1"/>
</dbReference>
<dbReference type="SMR" id="Q0W5T2"/>
<dbReference type="STRING" id="351160.RCIX914"/>
<dbReference type="GeneID" id="5144512"/>
<dbReference type="KEGG" id="rci:RCIX914"/>
<dbReference type="PATRIC" id="fig|351160.9.peg.1980"/>
<dbReference type="eggNOG" id="arCOG04299">
    <property type="taxonomic scope" value="Archaea"/>
</dbReference>
<dbReference type="OrthoDB" id="8042at2157"/>
<dbReference type="UniPathway" id="UPA00251">
    <property type="reaction ID" value="UER00319"/>
</dbReference>
<dbReference type="Proteomes" id="UP000000663">
    <property type="component" value="Chromosome"/>
</dbReference>
<dbReference type="GO" id="GO:0005737">
    <property type="term" value="C:cytoplasm"/>
    <property type="evidence" value="ECO:0007669"/>
    <property type="project" value="TreeGrafter"/>
</dbReference>
<dbReference type="GO" id="GO:0004418">
    <property type="term" value="F:hydroxymethylbilane synthase activity"/>
    <property type="evidence" value="ECO:0007669"/>
    <property type="project" value="UniProtKB-UniRule"/>
</dbReference>
<dbReference type="GO" id="GO:0006782">
    <property type="term" value="P:protoporphyrinogen IX biosynthetic process"/>
    <property type="evidence" value="ECO:0007669"/>
    <property type="project" value="UniProtKB-UniRule"/>
</dbReference>
<dbReference type="FunFam" id="3.40.190.10:FF:000005">
    <property type="entry name" value="Porphobilinogen deaminase"/>
    <property type="match status" value="1"/>
</dbReference>
<dbReference type="Gene3D" id="3.40.190.10">
    <property type="entry name" value="Periplasmic binding protein-like II"/>
    <property type="match status" value="2"/>
</dbReference>
<dbReference type="Gene3D" id="3.30.160.40">
    <property type="entry name" value="Porphobilinogen deaminase, C-terminal domain"/>
    <property type="match status" value="1"/>
</dbReference>
<dbReference type="HAMAP" id="MF_00260">
    <property type="entry name" value="Porphobil_deam"/>
    <property type="match status" value="1"/>
</dbReference>
<dbReference type="InterPro" id="IPR000860">
    <property type="entry name" value="HemC"/>
</dbReference>
<dbReference type="InterPro" id="IPR022419">
    <property type="entry name" value="Porphobilin_deaminase_cofac_BS"/>
</dbReference>
<dbReference type="InterPro" id="IPR022417">
    <property type="entry name" value="Porphobilin_deaminase_N"/>
</dbReference>
<dbReference type="InterPro" id="IPR022418">
    <property type="entry name" value="Porphobilinogen_deaminase_C"/>
</dbReference>
<dbReference type="InterPro" id="IPR036803">
    <property type="entry name" value="Porphobilinogen_deaminase_C_sf"/>
</dbReference>
<dbReference type="NCBIfam" id="TIGR00212">
    <property type="entry name" value="hemC"/>
    <property type="match status" value="1"/>
</dbReference>
<dbReference type="PANTHER" id="PTHR11557">
    <property type="entry name" value="PORPHOBILINOGEN DEAMINASE"/>
    <property type="match status" value="1"/>
</dbReference>
<dbReference type="PANTHER" id="PTHR11557:SF0">
    <property type="entry name" value="PORPHOBILINOGEN DEAMINASE"/>
    <property type="match status" value="1"/>
</dbReference>
<dbReference type="Pfam" id="PF01379">
    <property type="entry name" value="Porphobil_deam"/>
    <property type="match status" value="1"/>
</dbReference>
<dbReference type="Pfam" id="PF03900">
    <property type="entry name" value="Porphobil_deamC"/>
    <property type="match status" value="1"/>
</dbReference>
<dbReference type="PIRSF" id="PIRSF001438">
    <property type="entry name" value="4pyrrol_synth_OHMeBilane_synth"/>
    <property type="match status" value="1"/>
</dbReference>
<dbReference type="PRINTS" id="PR00151">
    <property type="entry name" value="PORPHBDMNASE"/>
</dbReference>
<dbReference type="SUPFAM" id="SSF53850">
    <property type="entry name" value="Periplasmic binding protein-like II"/>
    <property type="match status" value="1"/>
</dbReference>
<dbReference type="SUPFAM" id="SSF54782">
    <property type="entry name" value="Porphobilinogen deaminase (hydroxymethylbilane synthase), C-terminal domain"/>
    <property type="match status" value="1"/>
</dbReference>
<dbReference type="PROSITE" id="PS00533">
    <property type="entry name" value="PORPHOBILINOGEN_DEAM"/>
    <property type="match status" value="1"/>
</dbReference>
<reference key="1">
    <citation type="journal article" date="2006" name="Science">
        <title>Genome of rice cluster I archaea -- the key methane producers in the rice rhizosphere.</title>
        <authorList>
            <person name="Erkel C."/>
            <person name="Kube M."/>
            <person name="Reinhardt R."/>
            <person name="Liesack W."/>
        </authorList>
    </citation>
    <scope>NUCLEOTIDE SEQUENCE [LARGE SCALE GENOMIC DNA]</scope>
    <source>
        <strain>DSM 22066 / NBRC 105507 / MRE50</strain>
    </source>
</reference>
<evidence type="ECO:0000255" key="1">
    <source>
        <dbReference type="HAMAP-Rule" id="MF_00260"/>
    </source>
</evidence>
<gene>
    <name evidence="1" type="primary">hemC</name>
    <name type="ordered locus">UNCMA_19320</name>
    <name type="ORF">RCIX914</name>
</gene>
<sequence length="303" mass="33179">MRIGTRGSKLALAQAEKVRRLLKEQGVEATITVIKTSGDVQKDSPLYMMKGYGAFVREIDDLLLKNEVDLAVHSLKDIPTVRPENLVTAAVLKRESALDVAVIRNAERLADLPEGAVVGTSSTRRAAMIYRHYPGLVTKDIRGNVDTRLRKLRDGEYDAILLAEAGLIRLGLDLKVERLDPYNFVPAANQGVIAIVARQGTPEAEVVKELNDETTWIETRVERIIAAGLDGGCVVPMGVYATRVGDEIDVIGEVLSLDGRQQVRVRETIPVAGCEEHAKQVSEKLVLAGGLKLAEEARKELDR</sequence>
<protein>
    <recommendedName>
        <fullName evidence="1">Probable porphobilinogen deaminase</fullName>
        <shortName evidence="1">PBG</shortName>
        <ecNumber evidence="1">2.5.1.61</ecNumber>
    </recommendedName>
    <alternativeName>
        <fullName evidence="1">Hydroxymethylbilane synthase</fullName>
        <shortName evidence="1">HMBS</shortName>
    </alternativeName>
    <alternativeName>
        <fullName evidence="1">Pre-uroporphyrinogen synthase</fullName>
    </alternativeName>
</protein>
<accession>Q0W5T2</accession>